<reference key="1">
    <citation type="submission" date="2008-06" db="EMBL/GenBank/DDBJ databases">
        <title>Complete sequence of Stenotrophomonas maltophilia R551-3.</title>
        <authorList>
            <consortium name="US DOE Joint Genome Institute"/>
            <person name="Lucas S."/>
            <person name="Copeland A."/>
            <person name="Lapidus A."/>
            <person name="Glavina del Rio T."/>
            <person name="Dalin E."/>
            <person name="Tice H."/>
            <person name="Pitluck S."/>
            <person name="Chain P."/>
            <person name="Malfatti S."/>
            <person name="Shin M."/>
            <person name="Vergez L."/>
            <person name="Lang D."/>
            <person name="Schmutz J."/>
            <person name="Larimer F."/>
            <person name="Land M."/>
            <person name="Hauser L."/>
            <person name="Kyrpides N."/>
            <person name="Mikhailova N."/>
            <person name="Taghavi S."/>
            <person name="Monchy S."/>
            <person name="Newman L."/>
            <person name="Vangronsveld J."/>
            <person name="van der Lelie D."/>
            <person name="Richardson P."/>
        </authorList>
    </citation>
    <scope>NUCLEOTIDE SEQUENCE [LARGE SCALE GENOMIC DNA]</scope>
    <source>
        <strain>R551-3</strain>
    </source>
</reference>
<sequence>MLNDIKNNAQTRMAKSIDALKHTLTSIRTGRATPALLDRVTVNAYGNASTPLNQVASISNADAHSLLVTPFDKSMIKEIEKGLYNAEFTPNTLGTAIRINMPPPTEERRKELAKQVQKEGEGAKIAIRNIRQDANKEIAKLDKDKAISEDEKKRGEDDIQKLTDANIKDVDKVVADKEKELLSV</sequence>
<accession>B4SQ19</accession>
<name>RRF_STRM5</name>
<feature type="chain" id="PRO_1000090789" description="Ribosome-recycling factor">
    <location>
        <begin position="1"/>
        <end position="184"/>
    </location>
</feature>
<protein>
    <recommendedName>
        <fullName evidence="1">Ribosome-recycling factor</fullName>
        <shortName evidence="1">RRF</shortName>
    </recommendedName>
    <alternativeName>
        <fullName evidence="1">Ribosome-releasing factor</fullName>
    </alternativeName>
</protein>
<dbReference type="EMBL" id="CP001111">
    <property type="protein sequence ID" value="ACF50967.1"/>
    <property type="molecule type" value="Genomic_DNA"/>
</dbReference>
<dbReference type="RefSeq" id="WP_004151064.1">
    <property type="nucleotide sequence ID" value="NC_011071.1"/>
</dbReference>
<dbReference type="SMR" id="B4SQ19"/>
<dbReference type="STRING" id="391008.Smal_1262"/>
<dbReference type="KEGG" id="smt:Smal_1262"/>
<dbReference type="eggNOG" id="COG0233">
    <property type="taxonomic scope" value="Bacteria"/>
</dbReference>
<dbReference type="HOGENOM" id="CLU_073981_2_0_6"/>
<dbReference type="OrthoDB" id="9804006at2"/>
<dbReference type="Proteomes" id="UP000001867">
    <property type="component" value="Chromosome"/>
</dbReference>
<dbReference type="GO" id="GO:0005829">
    <property type="term" value="C:cytosol"/>
    <property type="evidence" value="ECO:0007669"/>
    <property type="project" value="GOC"/>
</dbReference>
<dbReference type="GO" id="GO:0043023">
    <property type="term" value="F:ribosomal large subunit binding"/>
    <property type="evidence" value="ECO:0007669"/>
    <property type="project" value="TreeGrafter"/>
</dbReference>
<dbReference type="GO" id="GO:0002184">
    <property type="term" value="P:cytoplasmic translational termination"/>
    <property type="evidence" value="ECO:0007669"/>
    <property type="project" value="TreeGrafter"/>
</dbReference>
<dbReference type="CDD" id="cd00520">
    <property type="entry name" value="RRF"/>
    <property type="match status" value="1"/>
</dbReference>
<dbReference type="FunFam" id="1.10.132.20:FF:000001">
    <property type="entry name" value="Ribosome-recycling factor"/>
    <property type="match status" value="1"/>
</dbReference>
<dbReference type="FunFam" id="3.30.1360.40:FF:000001">
    <property type="entry name" value="Ribosome-recycling factor"/>
    <property type="match status" value="1"/>
</dbReference>
<dbReference type="Gene3D" id="3.30.1360.40">
    <property type="match status" value="1"/>
</dbReference>
<dbReference type="Gene3D" id="1.10.132.20">
    <property type="entry name" value="Ribosome-recycling factor"/>
    <property type="match status" value="2"/>
</dbReference>
<dbReference type="HAMAP" id="MF_00040">
    <property type="entry name" value="RRF"/>
    <property type="match status" value="1"/>
</dbReference>
<dbReference type="InterPro" id="IPR002661">
    <property type="entry name" value="Ribosome_recyc_fac"/>
</dbReference>
<dbReference type="InterPro" id="IPR023584">
    <property type="entry name" value="Ribosome_recyc_fac_dom"/>
</dbReference>
<dbReference type="InterPro" id="IPR036191">
    <property type="entry name" value="RRF_sf"/>
</dbReference>
<dbReference type="NCBIfam" id="TIGR00496">
    <property type="entry name" value="frr"/>
    <property type="match status" value="1"/>
</dbReference>
<dbReference type="PANTHER" id="PTHR20982:SF3">
    <property type="entry name" value="MITOCHONDRIAL RIBOSOME RECYCLING FACTOR PSEUDO 1"/>
    <property type="match status" value="1"/>
</dbReference>
<dbReference type="PANTHER" id="PTHR20982">
    <property type="entry name" value="RIBOSOME RECYCLING FACTOR"/>
    <property type="match status" value="1"/>
</dbReference>
<dbReference type="Pfam" id="PF01765">
    <property type="entry name" value="RRF"/>
    <property type="match status" value="1"/>
</dbReference>
<dbReference type="SUPFAM" id="SSF55194">
    <property type="entry name" value="Ribosome recycling factor, RRF"/>
    <property type="match status" value="1"/>
</dbReference>
<gene>
    <name evidence="1" type="primary">frr</name>
    <name type="ordered locus">Smal_1262</name>
</gene>
<proteinExistence type="inferred from homology"/>
<comment type="function">
    <text evidence="1">Responsible for the release of ribosomes from messenger RNA at the termination of protein biosynthesis. May increase the efficiency of translation by recycling ribosomes from one round of translation to another.</text>
</comment>
<comment type="subcellular location">
    <subcellularLocation>
        <location evidence="1">Cytoplasm</location>
    </subcellularLocation>
</comment>
<comment type="similarity">
    <text evidence="1">Belongs to the RRF family.</text>
</comment>
<keyword id="KW-0963">Cytoplasm</keyword>
<keyword id="KW-0648">Protein biosynthesis</keyword>
<organism>
    <name type="scientific">Stenotrophomonas maltophilia (strain R551-3)</name>
    <dbReference type="NCBI Taxonomy" id="391008"/>
    <lineage>
        <taxon>Bacteria</taxon>
        <taxon>Pseudomonadati</taxon>
        <taxon>Pseudomonadota</taxon>
        <taxon>Gammaproteobacteria</taxon>
        <taxon>Lysobacterales</taxon>
        <taxon>Lysobacteraceae</taxon>
        <taxon>Stenotrophomonas</taxon>
        <taxon>Stenotrophomonas maltophilia group</taxon>
    </lineage>
</organism>
<evidence type="ECO:0000255" key="1">
    <source>
        <dbReference type="HAMAP-Rule" id="MF_00040"/>
    </source>
</evidence>